<name>RS7_HALMO</name>
<feature type="chain" id="PRO_0000124395" description="Small ribosomal subunit protein uS7">
    <location>
        <begin position="1"/>
        <end position="203"/>
    </location>
</feature>
<feature type="region of interest" description="Disordered" evidence="2">
    <location>
        <begin position="1"/>
        <end position="22"/>
    </location>
</feature>
<proteinExistence type="inferred from homology"/>
<protein>
    <recommendedName>
        <fullName evidence="1">Small ribosomal subunit protein uS7</fullName>
    </recommendedName>
    <alternativeName>
        <fullName evidence="3">30S ribosomal protein S7</fullName>
    </alternativeName>
</protein>
<organism>
    <name type="scientific">Halococcus morrhuae</name>
    <name type="common">Micrococcus morrhuae</name>
    <dbReference type="NCBI Taxonomy" id="2250"/>
    <lineage>
        <taxon>Archaea</taxon>
        <taxon>Methanobacteriati</taxon>
        <taxon>Methanobacteriota</taxon>
        <taxon>Stenosarchaea group</taxon>
        <taxon>Halobacteria</taxon>
        <taxon>Halobacteriales</taxon>
        <taxon>Halococcaceae</taxon>
        <taxon>Halococcus</taxon>
    </lineage>
</organism>
<comment type="function">
    <text evidence="1">One of the primary rRNA binding proteins, it binds directly to 16S rRNA where it nucleates assembly of the head domain of the 30S subunit. Is located at the subunit interface close to the decoding center.</text>
</comment>
<comment type="subunit">
    <text>Part of the 30S ribosomal subunit.</text>
</comment>
<comment type="similarity">
    <text evidence="1">Belongs to the universal ribosomal protein uS7 family.</text>
</comment>
<keyword id="KW-0687">Ribonucleoprotein</keyword>
<keyword id="KW-0689">Ribosomal protein</keyword>
<keyword id="KW-0694">RNA-binding</keyword>
<keyword id="KW-0699">rRNA-binding</keyword>
<gene>
    <name evidence="1" type="primary">rps7</name>
</gene>
<dbReference type="EMBL" id="X57145">
    <property type="protein sequence ID" value="CAA40435.1"/>
    <property type="molecule type" value="Genomic_DNA"/>
</dbReference>
<dbReference type="PIR" id="S03584">
    <property type="entry name" value="S03584"/>
</dbReference>
<dbReference type="SMR" id="P15356"/>
<dbReference type="GO" id="GO:0015935">
    <property type="term" value="C:small ribosomal subunit"/>
    <property type="evidence" value="ECO:0007669"/>
    <property type="project" value="InterPro"/>
</dbReference>
<dbReference type="GO" id="GO:0019843">
    <property type="term" value="F:rRNA binding"/>
    <property type="evidence" value="ECO:0007669"/>
    <property type="project" value="UniProtKB-UniRule"/>
</dbReference>
<dbReference type="GO" id="GO:0003735">
    <property type="term" value="F:structural constituent of ribosome"/>
    <property type="evidence" value="ECO:0007669"/>
    <property type="project" value="InterPro"/>
</dbReference>
<dbReference type="GO" id="GO:0006412">
    <property type="term" value="P:translation"/>
    <property type="evidence" value="ECO:0007669"/>
    <property type="project" value="UniProtKB-UniRule"/>
</dbReference>
<dbReference type="CDD" id="cd14867">
    <property type="entry name" value="uS7_Eukaryote"/>
    <property type="match status" value="1"/>
</dbReference>
<dbReference type="Gene3D" id="1.10.455.10">
    <property type="entry name" value="Ribosomal protein S7 domain"/>
    <property type="match status" value="1"/>
</dbReference>
<dbReference type="HAMAP" id="MF_00480_A">
    <property type="entry name" value="Ribosomal_uS7_A"/>
    <property type="match status" value="1"/>
</dbReference>
<dbReference type="InterPro" id="IPR000235">
    <property type="entry name" value="Ribosomal_uS7"/>
</dbReference>
<dbReference type="InterPro" id="IPR026018">
    <property type="entry name" value="Ribosomal_uS7_arc"/>
</dbReference>
<dbReference type="InterPro" id="IPR020606">
    <property type="entry name" value="Ribosomal_uS7_CS"/>
</dbReference>
<dbReference type="InterPro" id="IPR023798">
    <property type="entry name" value="Ribosomal_uS7_dom"/>
</dbReference>
<dbReference type="InterPro" id="IPR036823">
    <property type="entry name" value="Ribosomal_uS7_dom_sf"/>
</dbReference>
<dbReference type="InterPro" id="IPR005716">
    <property type="entry name" value="Ribosomal_uS7_euk/arc"/>
</dbReference>
<dbReference type="NCBIfam" id="NF003106">
    <property type="entry name" value="PRK04027.1"/>
    <property type="match status" value="1"/>
</dbReference>
<dbReference type="NCBIfam" id="TIGR01028">
    <property type="entry name" value="uS7_euk_arch"/>
    <property type="match status" value="1"/>
</dbReference>
<dbReference type="PANTHER" id="PTHR11205">
    <property type="entry name" value="RIBOSOMAL PROTEIN S7"/>
    <property type="match status" value="1"/>
</dbReference>
<dbReference type="Pfam" id="PF00177">
    <property type="entry name" value="Ribosomal_S7"/>
    <property type="match status" value="1"/>
</dbReference>
<dbReference type="PIRSF" id="PIRSF002122">
    <property type="entry name" value="RPS7p_RPS7a_RPS5e_RPS7o"/>
    <property type="match status" value="1"/>
</dbReference>
<dbReference type="SUPFAM" id="SSF47973">
    <property type="entry name" value="Ribosomal protein S7"/>
    <property type="match status" value="1"/>
</dbReference>
<dbReference type="PROSITE" id="PS00052">
    <property type="entry name" value="RIBOSOMAL_S7"/>
    <property type="match status" value="1"/>
</dbReference>
<sequence length="203" mass="22424">MSESEAPEPDQPAGAEEATGAKLFERWDVTGIEYDDPSTERYITVTPVEHTMGRHAGKQFQKSEISIVERLINRLMQTDENTGKKQQATRIVRNAFDLIAERTEESPVQVLVSAVENAAPREETVRLKYGGISVPQAVDVAPQRRVDQALKFIAEGTHSASFKSPTDAHEALAEQLTGAANYDVQTYAVNQKEEKERVAAAAR</sequence>
<evidence type="ECO:0000255" key="1">
    <source>
        <dbReference type="HAMAP-Rule" id="MF_00480"/>
    </source>
</evidence>
<evidence type="ECO:0000256" key="2">
    <source>
        <dbReference type="SAM" id="MobiDB-lite"/>
    </source>
</evidence>
<evidence type="ECO:0000305" key="3"/>
<reference key="1">
    <citation type="journal article" date="1989" name="J. Mol. Biol.">
        <title>Sequence, organization, transcription and evolution of RNA polymerase subunit genes from the archaebacterial extreme halophiles Halobacterium halobium and Halococcus morrhuae.</title>
        <authorList>
            <person name="Leffers H."/>
            <person name="Gropp F."/>
            <person name="Lottspeich F."/>
            <person name="Zillig W."/>
            <person name="Garrett R.A."/>
        </authorList>
    </citation>
    <scope>NUCLEOTIDE SEQUENCE [GENOMIC DNA]</scope>
    <source>
        <strain>ATCC 17082 / DSM 1307 / JCM 8876 / NBRC 14719 / NCIMB 787</strain>
    </source>
</reference>
<accession>P15356</accession>